<protein>
    <recommendedName>
        <fullName evidence="1">Ribosomal RNA large subunit methyltransferase H</fullName>
        <ecNumber evidence="1">2.1.1.177</ecNumber>
    </recommendedName>
    <alternativeName>
        <fullName evidence="1">23S rRNA (pseudouridine1915-N3)-methyltransferase</fullName>
    </alternativeName>
    <alternativeName>
        <fullName evidence="1">23S rRNA m3Psi1915 methyltransferase</fullName>
    </alternativeName>
    <alternativeName>
        <fullName evidence="1">rRNA (pseudouridine-N3-)-methyltransferase RlmH</fullName>
    </alternativeName>
</protein>
<accession>B9JES1</accession>
<proteinExistence type="inferred from homology"/>
<gene>
    <name evidence="1" type="primary">rlmH</name>
    <name type="ordered locus">Arad_4889</name>
</gene>
<evidence type="ECO:0000255" key="1">
    <source>
        <dbReference type="HAMAP-Rule" id="MF_00658"/>
    </source>
</evidence>
<feature type="chain" id="PRO_1000199806" description="Ribosomal RNA large subunit methyltransferase H">
    <location>
        <begin position="1"/>
        <end position="160"/>
    </location>
</feature>
<feature type="binding site" evidence="1">
    <location>
        <position position="76"/>
    </location>
    <ligand>
        <name>S-adenosyl-L-methionine</name>
        <dbReference type="ChEBI" id="CHEBI:59789"/>
    </ligand>
</feature>
<feature type="binding site" evidence="1">
    <location>
        <position position="108"/>
    </location>
    <ligand>
        <name>S-adenosyl-L-methionine</name>
        <dbReference type="ChEBI" id="CHEBI:59789"/>
    </ligand>
</feature>
<feature type="binding site" evidence="1">
    <location>
        <begin position="127"/>
        <end position="132"/>
    </location>
    <ligand>
        <name>S-adenosyl-L-methionine</name>
        <dbReference type="ChEBI" id="CHEBI:59789"/>
    </ligand>
</feature>
<dbReference type="EC" id="2.1.1.177" evidence="1"/>
<dbReference type="EMBL" id="CP000628">
    <property type="protein sequence ID" value="ACM28490.1"/>
    <property type="molecule type" value="Genomic_DNA"/>
</dbReference>
<dbReference type="RefSeq" id="WP_007698806.1">
    <property type="nucleotide sequence ID" value="NC_011985.1"/>
</dbReference>
<dbReference type="SMR" id="B9JES1"/>
<dbReference type="STRING" id="311403.Arad_4889"/>
<dbReference type="GeneID" id="86850362"/>
<dbReference type="KEGG" id="ara:Arad_4889"/>
<dbReference type="eggNOG" id="COG1576">
    <property type="taxonomic scope" value="Bacteria"/>
</dbReference>
<dbReference type="HOGENOM" id="CLU_100552_1_1_5"/>
<dbReference type="Proteomes" id="UP000001600">
    <property type="component" value="Chromosome 1"/>
</dbReference>
<dbReference type="GO" id="GO:0005737">
    <property type="term" value="C:cytoplasm"/>
    <property type="evidence" value="ECO:0007669"/>
    <property type="project" value="UniProtKB-SubCell"/>
</dbReference>
<dbReference type="GO" id="GO:0070038">
    <property type="term" value="F:rRNA (pseudouridine-N3-)-methyltransferase activity"/>
    <property type="evidence" value="ECO:0007669"/>
    <property type="project" value="UniProtKB-UniRule"/>
</dbReference>
<dbReference type="CDD" id="cd18081">
    <property type="entry name" value="RlmH-like"/>
    <property type="match status" value="1"/>
</dbReference>
<dbReference type="Gene3D" id="3.40.1280.10">
    <property type="match status" value="1"/>
</dbReference>
<dbReference type="HAMAP" id="MF_00658">
    <property type="entry name" value="23SrRNA_methyltr_H"/>
    <property type="match status" value="1"/>
</dbReference>
<dbReference type="InterPro" id="IPR029028">
    <property type="entry name" value="Alpha/beta_knot_MTases"/>
</dbReference>
<dbReference type="InterPro" id="IPR003742">
    <property type="entry name" value="RlmH-like"/>
</dbReference>
<dbReference type="InterPro" id="IPR029026">
    <property type="entry name" value="tRNA_m1G_MTases_N"/>
</dbReference>
<dbReference type="NCBIfam" id="NF000989">
    <property type="entry name" value="PRK00103.2-3"/>
    <property type="match status" value="1"/>
</dbReference>
<dbReference type="PANTHER" id="PTHR33603">
    <property type="entry name" value="METHYLTRANSFERASE"/>
    <property type="match status" value="1"/>
</dbReference>
<dbReference type="PANTHER" id="PTHR33603:SF1">
    <property type="entry name" value="RIBOSOMAL RNA LARGE SUBUNIT METHYLTRANSFERASE H"/>
    <property type="match status" value="1"/>
</dbReference>
<dbReference type="Pfam" id="PF02590">
    <property type="entry name" value="SPOUT_MTase"/>
    <property type="match status" value="1"/>
</dbReference>
<dbReference type="PIRSF" id="PIRSF004505">
    <property type="entry name" value="MT_bac"/>
    <property type="match status" value="1"/>
</dbReference>
<dbReference type="SUPFAM" id="SSF75217">
    <property type="entry name" value="alpha/beta knot"/>
    <property type="match status" value="1"/>
</dbReference>
<reference key="1">
    <citation type="journal article" date="2009" name="J. Bacteriol.">
        <title>Genome sequences of three Agrobacterium biovars help elucidate the evolution of multichromosome genomes in bacteria.</title>
        <authorList>
            <person name="Slater S.C."/>
            <person name="Goldman B.S."/>
            <person name="Goodner B."/>
            <person name="Setubal J.C."/>
            <person name="Farrand S.K."/>
            <person name="Nester E.W."/>
            <person name="Burr T.J."/>
            <person name="Banta L."/>
            <person name="Dickerman A.W."/>
            <person name="Paulsen I."/>
            <person name="Otten L."/>
            <person name="Suen G."/>
            <person name="Welch R."/>
            <person name="Almeida N.F."/>
            <person name="Arnold F."/>
            <person name="Burton O.T."/>
            <person name="Du Z."/>
            <person name="Ewing A."/>
            <person name="Godsy E."/>
            <person name="Heisel S."/>
            <person name="Houmiel K.L."/>
            <person name="Jhaveri J."/>
            <person name="Lu J."/>
            <person name="Miller N.M."/>
            <person name="Norton S."/>
            <person name="Chen Q."/>
            <person name="Phoolcharoen W."/>
            <person name="Ohlin V."/>
            <person name="Ondrusek D."/>
            <person name="Pride N."/>
            <person name="Stricklin S.L."/>
            <person name="Sun J."/>
            <person name="Wheeler C."/>
            <person name="Wilson L."/>
            <person name="Zhu H."/>
            <person name="Wood D.W."/>
        </authorList>
    </citation>
    <scope>NUCLEOTIDE SEQUENCE [LARGE SCALE GENOMIC DNA]</scope>
    <source>
        <strain>K84 / ATCC BAA-868</strain>
    </source>
</reference>
<organism>
    <name type="scientific">Rhizobium rhizogenes (strain K84 / ATCC BAA-868)</name>
    <name type="common">Agrobacterium radiobacter</name>
    <dbReference type="NCBI Taxonomy" id="311403"/>
    <lineage>
        <taxon>Bacteria</taxon>
        <taxon>Pseudomonadati</taxon>
        <taxon>Pseudomonadota</taxon>
        <taxon>Alphaproteobacteria</taxon>
        <taxon>Hyphomicrobiales</taxon>
        <taxon>Rhizobiaceae</taxon>
        <taxon>Rhizobium/Agrobacterium group</taxon>
        <taxon>Rhizobium</taxon>
    </lineage>
</organism>
<name>RLMH_RHIR8</name>
<keyword id="KW-0963">Cytoplasm</keyword>
<keyword id="KW-0489">Methyltransferase</keyword>
<keyword id="KW-0698">rRNA processing</keyword>
<keyword id="KW-0949">S-adenosyl-L-methionine</keyword>
<keyword id="KW-0808">Transferase</keyword>
<comment type="function">
    <text evidence="1">Specifically methylates the pseudouridine at position 1915 (m3Psi1915) in 23S rRNA.</text>
</comment>
<comment type="catalytic activity">
    <reaction evidence="1">
        <text>pseudouridine(1915) in 23S rRNA + S-adenosyl-L-methionine = N(3)-methylpseudouridine(1915) in 23S rRNA + S-adenosyl-L-homocysteine + H(+)</text>
        <dbReference type="Rhea" id="RHEA:42752"/>
        <dbReference type="Rhea" id="RHEA-COMP:10221"/>
        <dbReference type="Rhea" id="RHEA-COMP:10222"/>
        <dbReference type="ChEBI" id="CHEBI:15378"/>
        <dbReference type="ChEBI" id="CHEBI:57856"/>
        <dbReference type="ChEBI" id="CHEBI:59789"/>
        <dbReference type="ChEBI" id="CHEBI:65314"/>
        <dbReference type="ChEBI" id="CHEBI:74486"/>
        <dbReference type="EC" id="2.1.1.177"/>
    </reaction>
</comment>
<comment type="subunit">
    <text evidence="1">Homodimer.</text>
</comment>
<comment type="subcellular location">
    <subcellularLocation>
        <location evidence="1">Cytoplasm</location>
    </subcellularLocation>
</comment>
<comment type="similarity">
    <text evidence="1">Belongs to the RNA methyltransferase RlmH family.</text>
</comment>
<sequence>MRIGLFAVGRLKTGPEKDLAARYLDRFAKAGPAIGLELARMTEVAESRASNGETRKREEAVLLQKAHPDGGILILLDERGKALDSEAFAALLGTFRDQGKRDLTIAIGGADGLDPSLYDRADATICLGKMTWPHQLVRILIAEQLYRAVTILSGHPYHRV</sequence>